<keyword id="KW-0687">Ribonucleoprotein</keyword>
<keyword id="KW-0689">Ribosomal protein</keyword>
<keyword id="KW-0694">RNA-binding</keyword>
<keyword id="KW-0699">rRNA-binding</keyword>
<sequence>MSVRKLKPITPGQRFRVVNGYDAITTDKPEKSLLAPIKKSGGRNSQGKMTMRYKGGGHKKRYRVIDFKRDKQGIPATVASIEYDPNRTAFIALLNYQDGEKRYIIAQNGLQVDQNVVSSNEAATPEIGNAMPLANIPLGTVISCIELRPGQGAVMARSAGAFAQLLAREGKYATIKLPSGEIRRVLALCMATIGAVSNSDHQLMIGGKAGRSRWLGIRPRTRPVAMNPVDHPMGGGEGRASGGHPRSRKGLPAKGFKTRSRTKASNKYIVERRKTRKKK</sequence>
<organism>
    <name type="scientific">Christiangramia forsetii (strain DSM 17595 / CGMCC 1.15422 / KT0803)</name>
    <name type="common">Gramella forsetii</name>
    <dbReference type="NCBI Taxonomy" id="411154"/>
    <lineage>
        <taxon>Bacteria</taxon>
        <taxon>Pseudomonadati</taxon>
        <taxon>Bacteroidota</taxon>
        <taxon>Flavobacteriia</taxon>
        <taxon>Flavobacteriales</taxon>
        <taxon>Flavobacteriaceae</taxon>
        <taxon>Christiangramia</taxon>
    </lineage>
</organism>
<accession>A0M595</accession>
<dbReference type="EMBL" id="CU207366">
    <property type="protein sequence ID" value="CAL67790.1"/>
    <property type="molecule type" value="Genomic_DNA"/>
</dbReference>
<dbReference type="RefSeq" id="WP_011710693.1">
    <property type="nucleotide sequence ID" value="NC_008571.1"/>
</dbReference>
<dbReference type="SMR" id="A0M595"/>
<dbReference type="STRING" id="411154.GFO_2836"/>
<dbReference type="KEGG" id="gfo:GFO_2836"/>
<dbReference type="eggNOG" id="COG0090">
    <property type="taxonomic scope" value="Bacteria"/>
</dbReference>
<dbReference type="HOGENOM" id="CLU_036235_2_1_10"/>
<dbReference type="OrthoDB" id="9778722at2"/>
<dbReference type="Proteomes" id="UP000000755">
    <property type="component" value="Chromosome"/>
</dbReference>
<dbReference type="GO" id="GO:0015934">
    <property type="term" value="C:large ribosomal subunit"/>
    <property type="evidence" value="ECO:0007669"/>
    <property type="project" value="InterPro"/>
</dbReference>
<dbReference type="GO" id="GO:0019843">
    <property type="term" value="F:rRNA binding"/>
    <property type="evidence" value="ECO:0007669"/>
    <property type="project" value="UniProtKB-UniRule"/>
</dbReference>
<dbReference type="GO" id="GO:0003735">
    <property type="term" value="F:structural constituent of ribosome"/>
    <property type="evidence" value="ECO:0007669"/>
    <property type="project" value="InterPro"/>
</dbReference>
<dbReference type="GO" id="GO:0016740">
    <property type="term" value="F:transferase activity"/>
    <property type="evidence" value="ECO:0007669"/>
    <property type="project" value="InterPro"/>
</dbReference>
<dbReference type="GO" id="GO:0002181">
    <property type="term" value="P:cytoplasmic translation"/>
    <property type="evidence" value="ECO:0007669"/>
    <property type="project" value="TreeGrafter"/>
</dbReference>
<dbReference type="FunFam" id="2.30.30.30:FF:000001">
    <property type="entry name" value="50S ribosomal protein L2"/>
    <property type="match status" value="1"/>
</dbReference>
<dbReference type="FunFam" id="2.40.50.140:FF:000003">
    <property type="entry name" value="50S ribosomal protein L2"/>
    <property type="match status" value="1"/>
</dbReference>
<dbReference type="FunFam" id="4.10.950.10:FF:000001">
    <property type="entry name" value="50S ribosomal protein L2"/>
    <property type="match status" value="1"/>
</dbReference>
<dbReference type="Gene3D" id="2.30.30.30">
    <property type="match status" value="1"/>
</dbReference>
<dbReference type="Gene3D" id="2.40.50.140">
    <property type="entry name" value="Nucleic acid-binding proteins"/>
    <property type="match status" value="1"/>
</dbReference>
<dbReference type="Gene3D" id="4.10.950.10">
    <property type="entry name" value="Ribosomal protein L2, domain 3"/>
    <property type="match status" value="1"/>
</dbReference>
<dbReference type="HAMAP" id="MF_01320_B">
    <property type="entry name" value="Ribosomal_uL2_B"/>
    <property type="match status" value="1"/>
</dbReference>
<dbReference type="InterPro" id="IPR012340">
    <property type="entry name" value="NA-bd_OB-fold"/>
</dbReference>
<dbReference type="InterPro" id="IPR014722">
    <property type="entry name" value="Rib_uL2_dom2"/>
</dbReference>
<dbReference type="InterPro" id="IPR002171">
    <property type="entry name" value="Ribosomal_uL2"/>
</dbReference>
<dbReference type="InterPro" id="IPR005880">
    <property type="entry name" value="Ribosomal_uL2_bac/org-type"/>
</dbReference>
<dbReference type="InterPro" id="IPR022669">
    <property type="entry name" value="Ribosomal_uL2_C"/>
</dbReference>
<dbReference type="InterPro" id="IPR014726">
    <property type="entry name" value="Ribosomal_uL2_dom3"/>
</dbReference>
<dbReference type="InterPro" id="IPR022666">
    <property type="entry name" value="Ribosomal_uL2_RNA-bd_dom"/>
</dbReference>
<dbReference type="InterPro" id="IPR008991">
    <property type="entry name" value="Translation_prot_SH3-like_sf"/>
</dbReference>
<dbReference type="NCBIfam" id="TIGR01171">
    <property type="entry name" value="rplB_bact"/>
    <property type="match status" value="1"/>
</dbReference>
<dbReference type="PANTHER" id="PTHR13691:SF5">
    <property type="entry name" value="LARGE RIBOSOMAL SUBUNIT PROTEIN UL2M"/>
    <property type="match status" value="1"/>
</dbReference>
<dbReference type="PANTHER" id="PTHR13691">
    <property type="entry name" value="RIBOSOMAL PROTEIN L2"/>
    <property type="match status" value="1"/>
</dbReference>
<dbReference type="Pfam" id="PF00181">
    <property type="entry name" value="Ribosomal_L2"/>
    <property type="match status" value="1"/>
</dbReference>
<dbReference type="Pfam" id="PF03947">
    <property type="entry name" value="Ribosomal_L2_C"/>
    <property type="match status" value="1"/>
</dbReference>
<dbReference type="PIRSF" id="PIRSF002158">
    <property type="entry name" value="Ribosomal_L2"/>
    <property type="match status" value="1"/>
</dbReference>
<dbReference type="SMART" id="SM01383">
    <property type="entry name" value="Ribosomal_L2"/>
    <property type="match status" value="1"/>
</dbReference>
<dbReference type="SMART" id="SM01382">
    <property type="entry name" value="Ribosomal_L2_C"/>
    <property type="match status" value="1"/>
</dbReference>
<dbReference type="SUPFAM" id="SSF50249">
    <property type="entry name" value="Nucleic acid-binding proteins"/>
    <property type="match status" value="1"/>
</dbReference>
<dbReference type="SUPFAM" id="SSF50104">
    <property type="entry name" value="Translation proteins SH3-like domain"/>
    <property type="match status" value="1"/>
</dbReference>
<reference key="1">
    <citation type="journal article" date="2006" name="Environ. Microbiol.">
        <title>Whole genome analysis of the marine Bacteroidetes'Gramella forsetii' reveals adaptations to degradation of polymeric organic matter.</title>
        <authorList>
            <person name="Bauer M."/>
            <person name="Kube M."/>
            <person name="Teeling H."/>
            <person name="Richter M."/>
            <person name="Lombardot T."/>
            <person name="Allers E."/>
            <person name="Wuerdemann C.A."/>
            <person name="Quast C."/>
            <person name="Kuhl H."/>
            <person name="Knaust F."/>
            <person name="Woebken D."/>
            <person name="Bischof K."/>
            <person name="Mussmann M."/>
            <person name="Choudhuri J.V."/>
            <person name="Meyer F."/>
            <person name="Reinhardt R."/>
            <person name="Amann R.I."/>
            <person name="Gloeckner F.O."/>
        </authorList>
    </citation>
    <scope>NUCLEOTIDE SEQUENCE [LARGE SCALE GENOMIC DNA]</scope>
    <source>
        <strain>DSM 17595 / CGMCC 1.15422 / KT0803</strain>
    </source>
</reference>
<protein>
    <recommendedName>
        <fullName evidence="1">Large ribosomal subunit protein uL2</fullName>
    </recommendedName>
    <alternativeName>
        <fullName evidence="3">50S ribosomal protein L2</fullName>
    </alternativeName>
</protein>
<name>RL2_CHRFK</name>
<evidence type="ECO:0000255" key="1">
    <source>
        <dbReference type="HAMAP-Rule" id="MF_01320"/>
    </source>
</evidence>
<evidence type="ECO:0000256" key="2">
    <source>
        <dbReference type="SAM" id="MobiDB-lite"/>
    </source>
</evidence>
<evidence type="ECO:0000305" key="3"/>
<comment type="function">
    <text evidence="1">One of the primary rRNA binding proteins. Required for association of the 30S and 50S subunits to form the 70S ribosome, for tRNA binding and peptide bond formation. It has been suggested to have peptidyltransferase activity; this is somewhat controversial. Makes several contacts with the 16S rRNA in the 70S ribosome.</text>
</comment>
<comment type="subunit">
    <text evidence="1">Part of the 50S ribosomal subunit. Forms a bridge to the 30S subunit in the 70S ribosome.</text>
</comment>
<comment type="similarity">
    <text evidence="1">Belongs to the universal ribosomal protein uL2 family.</text>
</comment>
<feature type="chain" id="PRO_0000309924" description="Large ribosomal subunit protein uL2">
    <location>
        <begin position="1"/>
        <end position="279"/>
    </location>
</feature>
<feature type="region of interest" description="Disordered" evidence="2">
    <location>
        <begin position="223"/>
        <end position="279"/>
    </location>
</feature>
<feature type="compositionally biased region" description="Basic residues" evidence="2">
    <location>
        <begin position="245"/>
        <end position="264"/>
    </location>
</feature>
<gene>
    <name evidence="1" type="primary">rplB</name>
    <name type="ordered locus">GFO_2836</name>
</gene>
<proteinExistence type="inferred from homology"/>